<gene>
    <name type="primary">PPH3</name>
    <name type="ordered locus">YDR075W</name>
    <name type="ORF">D4421</name>
</gene>
<protein>
    <recommendedName>
        <fullName>Serine/threonine-protein phosphatase 4 catalytic subunit</fullName>
        <shortName>PP4C</shortName>
        <ecNumber>3.1.3.16</ecNumber>
    </recommendedName>
    <alternativeName>
        <fullName>Phosphatase PP2A-like catalytic subunit PPH3</fullName>
    </alternativeName>
</protein>
<proteinExistence type="evidence at protein level"/>
<reference key="1">
    <citation type="journal article" date="1991" name="Mol. Cell. Biol.">
        <title>Protein phosphatase 2A in Saccharomyces cerevisiae: effects on cell growth and bud morphogenesis.</title>
        <authorList>
            <person name="Ronne H."/>
            <person name="Carlberg M."/>
            <person name="Hu G.-Z."/>
            <person name="Nehlin J.O."/>
        </authorList>
    </citation>
    <scope>NUCLEOTIDE SEQUENCE [GENOMIC DNA]</scope>
    <source>
        <strain>ATCC 208353 / W303-1A</strain>
    </source>
</reference>
<reference key="2">
    <citation type="journal article" date="1994" name="Yeast">
        <title>The Saccharomyces cerevisiae gene PPH3 encodes a protein phosphatase with properties different from PPX, PP1 and PP2A.</title>
        <authorList>
            <person name="Hoffmann R."/>
            <person name="Jung S."/>
            <person name="Ehrmann M."/>
            <person name="Hofer H.W."/>
        </authorList>
    </citation>
    <scope>NUCLEOTIDE SEQUENCE [GENOMIC DNA]</scope>
    <scope>CHARACTERIZATION</scope>
</reference>
<reference key="3">
    <citation type="journal article" date="1997" name="Nature">
        <title>The nucleotide sequence of Saccharomyces cerevisiae chromosome IV.</title>
        <authorList>
            <person name="Jacq C."/>
            <person name="Alt-Moerbe J."/>
            <person name="Andre B."/>
            <person name="Arnold W."/>
            <person name="Bahr A."/>
            <person name="Ballesta J.P.G."/>
            <person name="Bargues M."/>
            <person name="Baron L."/>
            <person name="Becker A."/>
            <person name="Biteau N."/>
            <person name="Bloecker H."/>
            <person name="Blugeon C."/>
            <person name="Boskovic J."/>
            <person name="Brandt P."/>
            <person name="Brueckner M."/>
            <person name="Buitrago M.J."/>
            <person name="Coster F."/>
            <person name="Delaveau T."/>
            <person name="del Rey F."/>
            <person name="Dujon B."/>
            <person name="Eide L.G."/>
            <person name="Garcia-Cantalejo J.M."/>
            <person name="Goffeau A."/>
            <person name="Gomez-Peris A."/>
            <person name="Granotier C."/>
            <person name="Hanemann V."/>
            <person name="Hankeln T."/>
            <person name="Hoheisel J.D."/>
            <person name="Jaeger W."/>
            <person name="Jimenez A."/>
            <person name="Jonniaux J.-L."/>
            <person name="Kraemer C."/>
            <person name="Kuester H."/>
            <person name="Laamanen P."/>
            <person name="Legros Y."/>
            <person name="Louis E.J."/>
            <person name="Moeller-Rieker S."/>
            <person name="Monnet A."/>
            <person name="Moro M."/>
            <person name="Mueller-Auer S."/>
            <person name="Nussbaumer B."/>
            <person name="Paricio N."/>
            <person name="Paulin L."/>
            <person name="Perea J."/>
            <person name="Perez-Alonso M."/>
            <person name="Perez-Ortin J.E."/>
            <person name="Pohl T.M."/>
            <person name="Prydz H."/>
            <person name="Purnelle B."/>
            <person name="Rasmussen S.W."/>
            <person name="Remacha M.A."/>
            <person name="Revuelta J.L."/>
            <person name="Rieger M."/>
            <person name="Salom D."/>
            <person name="Saluz H.P."/>
            <person name="Saiz J.E."/>
            <person name="Saren A.-M."/>
            <person name="Schaefer M."/>
            <person name="Scharfe M."/>
            <person name="Schmidt E.R."/>
            <person name="Schneider C."/>
            <person name="Scholler P."/>
            <person name="Schwarz S."/>
            <person name="Soler-Mira A."/>
            <person name="Urrestarazu L.A."/>
            <person name="Verhasselt P."/>
            <person name="Vissers S."/>
            <person name="Voet M."/>
            <person name="Volckaert G."/>
            <person name="Wagner G."/>
            <person name="Wambutt R."/>
            <person name="Wedler E."/>
            <person name="Wedler H."/>
            <person name="Woelfl S."/>
            <person name="Harris D.E."/>
            <person name="Bowman S."/>
            <person name="Brown D."/>
            <person name="Churcher C.M."/>
            <person name="Connor R."/>
            <person name="Dedman K."/>
            <person name="Gentles S."/>
            <person name="Hamlin N."/>
            <person name="Hunt S."/>
            <person name="Jones L."/>
            <person name="McDonald S."/>
            <person name="Murphy L.D."/>
            <person name="Niblett D."/>
            <person name="Odell C."/>
            <person name="Oliver K."/>
            <person name="Rajandream M.A."/>
            <person name="Richards C."/>
            <person name="Shore L."/>
            <person name="Walsh S.V."/>
            <person name="Barrell B.G."/>
            <person name="Dietrich F.S."/>
            <person name="Mulligan J.T."/>
            <person name="Allen E."/>
            <person name="Araujo R."/>
            <person name="Aviles E."/>
            <person name="Berno A."/>
            <person name="Carpenter J."/>
            <person name="Chen E."/>
            <person name="Cherry J.M."/>
            <person name="Chung E."/>
            <person name="Duncan M."/>
            <person name="Hunicke-Smith S."/>
            <person name="Hyman R.W."/>
            <person name="Komp C."/>
            <person name="Lashkari D."/>
            <person name="Lew H."/>
            <person name="Lin D."/>
            <person name="Mosedale D."/>
            <person name="Nakahara K."/>
            <person name="Namath A."/>
            <person name="Oefner P."/>
            <person name="Oh C."/>
            <person name="Petel F.X."/>
            <person name="Roberts D."/>
            <person name="Schramm S."/>
            <person name="Schroeder M."/>
            <person name="Shogren T."/>
            <person name="Shroff N."/>
            <person name="Winant A."/>
            <person name="Yelton M.A."/>
            <person name="Botstein D."/>
            <person name="Davis R.W."/>
            <person name="Johnston M."/>
            <person name="Andrews S."/>
            <person name="Brinkman R."/>
            <person name="Cooper J."/>
            <person name="Ding H."/>
            <person name="Du Z."/>
            <person name="Favello A."/>
            <person name="Fulton L."/>
            <person name="Gattung S."/>
            <person name="Greco T."/>
            <person name="Hallsworth K."/>
            <person name="Hawkins J."/>
            <person name="Hillier L.W."/>
            <person name="Jier M."/>
            <person name="Johnson D."/>
            <person name="Johnston L."/>
            <person name="Kirsten J."/>
            <person name="Kucaba T."/>
            <person name="Langston Y."/>
            <person name="Latreille P."/>
            <person name="Le T."/>
            <person name="Mardis E."/>
            <person name="Menezes S."/>
            <person name="Miller N."/>
            <person name="Nhan M."/>
            <person name="Pauley A."/>
            <person name="Peluso D."/>
            <person name="Rifkin L."/>
            <person name="Riles L."/>
            <person name="Taich A."/>
            <person name="Trevaskis E."/>
            <person name="Vignati D."/>
            <person name="Wilcox L."/>
            <person name="Wohldman P."/>
            <person name="Vaudin M."/>
            <person name="Wilson R."/>
            <person name="Waterston R."/>
            <person name="Albermann K."/>
            <person name="Hani J."/>
            <person name="Heumann K."/>
            <person name="Kleine K."/>
            <person name="Mewes H.-W."/>
            <person name="Zollner A."/>
            <person name="Zaccaria P."/>
        </authorList>
    </citation>
    <scope>NUCLEOTIDE SEQUENCE [LARGE SCALE GENOMIC DNA]</scope>
    <source>
        <strain>ATCC 204508 / S288c</strain>
    </source>
</reference>
<reference key="4">
    <citation type="journal article" date="2014" name="G3 (Bethesda)">
        <title>The reference genome sequence of Saccharomyces cerevisiae: Then and now.</title>
        <authorList>
            <person name="Engel S.R."/>
            <person name="Dietrich F.S."/>
            <person name="Fisk D.G."/>
            <person name="Binkley G."/>
            <person name="Balakrishnan R."/>
            <person name="Costanzo M.C."/>
            <person name="Dwight S.S."/>
            <person name="Hitz B.C."/>
            <person name="Karra K."/>
            <person name="Nash R.S."/>
            <person name="Weng S."/>
            <person name="Wong E.D."/>
            <person name="Lloyd P."/>
            <person name="Skrzypek M.S."/>
            <person name="Miyasato S.R."/>
            <person name="Simison M."/>
            <person name="Cherry J.M."/>
        </authorList>
    </citation>
    <scope>GENOME REANNOTATION</scope>
    <source>
        <strain>ATCC 204508 / S288c</strain>
    </source>
</reference>
<reference key="5">
    <citation type="journal article" date="2007" name="Genome Res.">
        <title>Approaching a complete repository of sequence-verified protein-encoding clones for Saccharomyces cerevisiae.</title>
        <authorList>
            <person name="Hu Y."/>
            <person name="Rolfs A."/>
            <person name="Bhullar B."/>
            <person name="Murthy T.V.S."/>
            <person name="Zhu C."/>
            <person name="Berger M.F."/>
            <person name="Camargo A.A."/>
            <person name="Kelley F."/>
            <person name="McCarron S."/>
            <person name="Jepson D."/>
            <person name="Richardson A."/>
            <person name="Raphael J."/>
            <person name="Moreira D."/>
            <person name="Taycher E."/>
            <person name="Zuo D."/>
            <person name="Mohr S."/>
            <person name="Kane M.F."/>
            <person name="Williamson J."/>
            <person name="Simpson A.J.G."/>
            <person name="Bulyk M.L."/>
            <person name="Harlow E."/>
            <person name="Marsischky G."/>
            <person name="Kolodner R.D."/>
            <person name="LaBaer J."/>
        </authorList>
    </citation>
    <scope>NUCLEOTIDE SEQUENCE [GENOMIC DNA]</scope>
    <source>
        <strain>ATCC 204508 / S288c</strain>
    </source>
</reference>
<reference key="6">
    <citation type="journal article" date="2000" name="J. Biol. Chem.">
        <title>Tripartite regulation of Gln3p by TOR, Ure2p, and phosphatases.</title>
        <authorList>
            <person name="Bertram P.G."/>
            <person name="Choi J.H."/>
            <person name="Carvalho J."/>
            <person name="Ai W."/>
            <person name="Zeng C."/>
            <person name="Chan T.-F."/>
            <person name="Zheng X.F.S."/>
        </authorList>
    </citation>
    <scope>FUNCTION IN GLN3 DEPHOSPHORYLATION</scope>
</reference>
<reference key="7">
    <citation type="journal article" date="2003" name="Mol. Biol. Cell">
        <title>Interaction with Tap42 is required for the essential function of Sit4 and type 2A phosphatases.</title>
        <authorList>
            <person name="Wang H."/>
            <person name="Wang X."/>
            <person name="Jiang Y."/>
        </authorList>
    </citation>
    <scope>INTERACTION WITH TAP42</scope>
</reference>
<reference key="8">
    <citation type="journal article" date="2003" name="Nature">
        <title>Global analysis of protein localization in budding yeast.</title>
        <authorList>
            <person name="Huh W.-K."/>
            <person name="Falvo J.V."/>
            <person name="Gerke L.C."/>
            <person name="Carroll A.S."/>
            <person name="Howson R.W."/>
            <person name="Weissman J.S."/>
            <person name="O'Shea E.K."/>
        </authorList>
    </citation>
    <scope>SUBCELLULAR LOCATION [LARGE SCALE ANALYSIS]</scope>
</reference>
<reference key="9">
    <citation type="journal article" date="2003" name="Nature">
        <title>Global analysis of protein expression in yeast.</title>
        <authorList>
            <person name="Ghaemmaghami S."/>
            <person name="Huh W.-K."/>
            <person name="Bower K."/>
            <person name="Howson R.W."/>
            <person name="Belle A."/>
            <person name="Dephoure N."/>
            <person name="O'Shea E.K."/>
            <person name="Weissman J.S."/>
        </authorList>
    </citation>
    <scope>LEVEL OF PROTEIN EXPRESSION [LARGE SCALE ANALYSIS]</scope>
</reference>
<reference key="10">
    <citation type="journal article" date="2005" name="Biochem. J.">
        <title>Specific interactions of PP2A and PP2A-like phosphatases with the yeast PTPA homologues, Ypa1 and Ypa2.</title>
        <authorList>
            <person name="Van Hoof C."/>
            <person name="Martens E."/>
            <person name="Longin S."/>
            <person name="Jordens J."/>
            <person name="Stevens I."/>
            <person name="Janssens V."/>
            <person name="Goris J."/>
        </authorList>
    </citation>
    <scope>INTERACTION WITH PPE1 AND RRD1</scope>
</reference>
<reference key="11">
    <citation type="journal article" date="2005" name="Mol. Cell. Proteomics">
        <title>A novel, evolutionarily conserved protein phosphatase complex involved in cisplatin sensitivity.</title>
        <authorList>
            <person name="Gingras A.-C."/>
            <person name="Caballero M."/>
            <person name="Zarske M."/>
            <person name="Sanchez A."/>
            <person name="Hazbun T.R."/>
            <person name="Fields S."/>
            <person name="Sonenberg N."/>
            <person name="Hafen E."/>
            <person name="Raught B."/>
            <person name="Aebersold R."/>
        </authorList>
    </citation>
    <scope>IDENTIFICATION IN HTP-C COMPLEX</scope>
    <scope>IDENTIFICATION BY MASS SPECTROMETRY</scope>
    <scope>INTERACTION WITH SPT5</scope>
</reference>
<reference key="12">
    <citation type="journal article" date="2006" name="Nature">
        <title>A phosphatase complex that dephosphorylates gamma-H2AX regulates DNA damage checkpoint recovery.</title>
        <authorList>
            <person name="Keogh M.-C."/>
            <person name="Kim J.-A."/>
            <person name="Downey M."/>
            <person name="Fillingham J."/>
            <person name="Chowdhury D."/>
            <person name="Harrison J.C."/>
            <person name="Onishi M."/>
            <person name="Datta N."/>
            <person name="Galicia S."/>
            <person name="Emili A."/>
            <person name="Lieberman J."/>
            <person name="Shen X."/>
            <person name="Buratowski S."/>
            <person name="Haber J.E."/>
            <person name="Durocher D."/>
            <person name="Greenblatt J.F."/>
            <person name="Krogan N.J."/>
        </authorList>
    </citation>
    <scope>FUNCTION</scope>
    <scope>IDENTIFICATION IN HTP-C COMPLEX</scope>
    <scope>IDENTIFICATION BY MASS SPECTROMETRY</scope>
</reference>
<reference key="13">
    <citation type="journal article" date="2012" name="Proc. Natl. Acad. Sci. U.S.A.">
        <title>N-terminal acetylome analyses and functional insights of the N-terminal acetyltransferase NatB.</title>
        <authorList>
            <person name="Van Damme P."/>
            <person name="Lasa M."/>
            <person name="Polevoda B."/>
            <person name="Gazquez C."/>
            <person name="Elosegui-Artola A."/>
            <person name="Kim D.S."/>
            <person name="De Juan-Pardo E."/>
            <person name="Demeyer K."/>
            <person name="Hole K."/>
            <person name="Larrea E."/>
            <person name="Timmerman E."/>
            <person name="Prieto J."/>
            <person name="Arnesen T."/>
            <person name="Sherman F."/>
            <person name="Gevaert K."/>
            <person name="Aldabe R."/>
        </authorList>
    </citation>
    <scope>IDENTIFICATION BY MASS SPECTROMETRY [LARGE SCALE ANALYSIS]</scope>
</reference>
<accession>P32345</accession>
<accession>D6VS61</accession>
<name>PP4C_YEAST</name>
<comment type="function">
    <text evidence="2 8">Forms the histone H2A phosphatase complex in association with the regulatory subunits PSY2 and PSY4, which dephosphorylates H2AS128ph (gamma-H2A) that has been displaced from sites of DNA lesions in the double-stranded DNA break repair process. Dephosphorylation is necessary for efficient recovery from the DNA damage checkpoint. PPH3 is directly involved in the dephosphorylation and activation of the transcription factor GLN3 in response to nutrient availability.</text>
</comment>
<comment type="catalytic activity">
    <reaction>
        <text>O-phospho-L-seryl-[protein] + H2O = L-seryl-[protein] + phosphate</text>
        <dbReference type="Rhea" id="RHEA:20629"/>
        <dbReference type="Rhea" id="RHEA-COMP:9863"/>
        <dbReference type="Rhea" id="RHEA-COMP:11604"/>
        <dbReference type="ChEBI" id="CHEBI:15377"/>
        <dbReference type="ChEBI" id="CHEBI:29999"/>
        <dbReference type="ChEBI" id="CHEBI:43474"/>
        <dbReference type="ChEBI" id="CHEBI:83421"/>
        <dbReference type="EC" id="3.1.3.16"/>
    </reaction>
</comment>
<comment type="catalytic activity">
    <reaction>
        <text>O-phospho-L-threonyl-[protein] + H2O = L-threonyl-[protein] + phosphate</text>
        <dbReference type="Rhea" id="RHEA:47004"/>
        <dbReference type="Rhea" id="RHEA-COMP:11060"/>
        <dbReference type="Rhea" id="RHEA-COMP:11605"/>
        <dbReference type="ChEBI" id="CHEBI:15377"/>
        <dbReference type="ChEBI" id="CHEBI:30013"/>
        <dbReference type="ChEBI" id="CHEBI:43474"/>
        <dbReference type="ChEBI" id="CHEBI:61977"/>
        <dbReference type="EC" id="3.1.3.16"/>
    </reaction>
</comment>
<comment type="cofactor">
    <cofactor evidence="1">
        <name>Mn(2+)</name>
        <dbReference type="ChEBI" id="CHEBI:29035"/>
    </cofactor>
    <text evidence="1">Binds 2 manganese ions per subunit.</text>
</comment>
<comment type="subunit">
    <text evidence="3 6 7 8">Catalytic subunit of the histone H2A phosphatase complex (HTP-C) containing PPH3, PSY2 and PSY4. Inactivated in a complex with phosphatase methylesterase PPE1 (PP2Ai). Interacts with phosphatase 2A activator RRD1, which can reactivate PP2Ai by dissociating the catalytic subunit from the complex. Interacts with SPT5 and TAP42.</text>
</comment>
<comment type="interaction">
    <interactant intactId="EBI-12759">
        <id>P32345</id>
    </interactant>
    <interactant intactId="EBI-29107">
        <id>P40164</id>
        <label>PSY2</label>
    </interactant>
    <organismsDiffer>false</organismsDiffer>
    <experiments>11</experiments>
</comment>
<comment type="interaction">
    <interactant intactId="EBI-12759">
        <id>P32345</id>
    </interactant>
    <interactant intactId="EBI-21239">
        <id>P38193</id>
        <label>PSY4</label>
    </interactant>
    <organismsDiffer>false</organismsDiffer>
    <experiments>11</experiments>
</comment>
<comment type="subcellular location">
    <subcellularLocation>
        <location evidence="4">Cytoplasm</location>
    </subcellularLocation>
    <subcellularLocation>
        <location evidence="4">Nucleus</location>
    </subcellularLocation>
</comment>
<comment type="PTM">
    <text evidence="1">Reversibly methyl esterified on Leu-308 by leucine carboxyl methyltransferase 1 (PPM1) and protein phosphatase methylesterase 1 (PPE1). Carboxyl methylation influences the affinity of the catalytic subunit for the different regulatory subunits, thereby modulating the PP2A holoenzyme's substrate specificity, enzyme activity and cellular localization (By similarity).</text>
</comment>
<comment type="miscellaneous">
    <text evidence="5">Present with 2840 molecules/cell in log phase SD medium.</text>
</comment>
<comment type="similarity">
    <text evidence="9">Belongs to the PPP phosphatase family. PP-4 (PP-X) subfamily.</text>
</comment>
<evidence type="ECO:0000250" key="1"/>
<evidence type="ECO:0000269" key="2">
    <source>
    </source>
</evidence>
<evidence type="ECO:0000269" key="3">
    <source>
    </source>
</evidence>
<evidence type="ECO:0000269" key="4">
    <source>
    </source>
</evidence>
<evidence type="ECO:0000269" key="5">
    <source>
    </source>
</evidence>
<evidence type="ECO:0000269" key="6">
    <source>
    </source>
</evidence>
<evidence type="ECO:0000269" key="7">
    <source>
    </source>
</evidence>
<evidence type="ECO:0000269" key="8">
    <source>
    </source>
</evidence>
<evidence type="ECO:0000305" key="9"/>
<dbReference type="EC" id="3.1.3.16"/>
<dbReference type="EMBL" id="Z46796">
    <property type="protein sequence ID" value="CAA86797.1"/>
    <property type="molecule type" value="Genomic_DNA"/>
</dbReference>
<dbReference type="EMBL" id="X58858">
    <property type="protein sequence ID" value="CAA41662.1"/>
    <property type="molecule type" value="Genomic_DNA"/>
</dbReference>
<dbReference type="EMBL" id="X82086">
    <property type="protein sequence ID" value="CAA57602.1"/>
    <property type="molecule type" value="Genomic_DNA"/>
</dbReference>
<dbReference type="EMBL" id="Z74371">
    <property type="protein sequence ID" value="CAA98894.1"/>
    <property type="molecule type" value="Genomic_DNA"/>
</dbReference>
<dbReference type="EMBL" id="AY557686">
    <property type="protein sequence ID" value="AAS56012.1"/>
    <property type="molecule type" value="Genomic_DNA"/>
</dbReference>
<dbReference type="EMBL" id="BK006938">
    <property type="protein sequence ID" value="DAA11921.1"/>
    <property type="molecule type" value="Genomic_DNA"/>
</dbReference>
<dbReference type="PIR" id="S44331">
    <property type="entry name" value="PABY3"/>
</dbReference>
<dbReference type="RefSeq" id="NP_010360.1">
    <property type="nucleotide sequence ID" value="NM_001180383.1"/>
</dbReference>
<dbReference type="SMR" id="P32345"/>
<dbReference type="BioGRID" id="32130">
    <property type="interactions" value="384"/>
</dbReference>
<dbReference type="ComplexPortal" id="CPX-1846">
    <property type="entry name" value="Histone H2A phosphatase complex"/>
</dbReference>
<dbReference type="DIP" id="DIP-3905N"/>
<dbReference type="FunCoup" id="P32345">
    <property type="interactions" value="150"/>
</dbReference>
<dbReference type="IntAct" id="P32345">
    <property type="interactions" value="36"/>
</dbReference>
<dbReference type="MINT" id="P32345"/>
<dbReference type="STRING" id="4932.YDR075W"/>
<dbReference type="PaxDb" id="4932-YDR075W"/>
<dbReference type="PeptideAtlas" id="P32345"/>
<dbReference type="TopDownProteomics" id="P32345"/>
<dbReference type="EnsemblFungi" id="YDR075W_mRNA">
    <property type="protein sequence ID" value="YDR075W"/>
    <property type="gene ID" value="YDR075W"/>
</dbReference>
<dbReference type="GeneID" id="851647"/>
<dbReference type="KEGG" id="sce:YDR075W"/>
<dbReference type="AGR" id="SGD:S000002482"/>
<dbReference type="SGD" id="S000002482">
    <property type="gene designation" value="PPH3"/>
</dbReference>
<dbReference type="VEuPathDB" id="FungiDB:YDR075W"/>
<dbReference type="eggNOG" id="KOG0372">
    <property type="taxonomic scope" value="Eukaryota"/>
</dbReference>
<dbReference type="GeneTree" id="ENSGT00930000151040"/>
<dbReference type="HOGENOM" id="CLU_004962_8_1_1"/>
<dbReference type="InParanoid" id="P32345"/>
<dbReference type="OMA" id="LCEIICD"/>
<dbReference type="OrthoDB" id="1930084at2759"/>
<dbReference type="BioCyc" id="YEAST:G3O-29680-MONOMER"/>
<dbReference type="BioGRID-ORCS" id="851647">
    <property type="hits" value="0 hits in 10 CRISPR screens"/>
</dbReference>
<dbReference type="PRO" id="PR:P32345"/>
<dbReference type="Proteomes" id="UP000002311">
    <property type="component" value="Chromosome IV"/>
</dbReference>
<dbReference type="RNAct" id="P32345">
    <property type="molecule type" value="protein"/>
</dbReference>
<dbReference type="GO" id="GO:0005737">
    <property type="term" value="C:cytoplasm"/>
    <property type="evidence" value="ECO:0007005"/>
    <property type="project" value="SGD"/>
</dbReference>
<dbReference type="GO" id="GO:0034399">
    <property type="term" value="C:nuclear periphery"/>
    <property type="evidence" value="ECO:0000314"/>
    <property type="project" value="SGD"/>
</dbReference>
<dbReference type="GO" id="GO:0005634">
    <property type="term" value="C:nucleus"/>
    <property type="evidence" value="ECO:0007005"/>
    <property type="project" value="SGD"/>
</dbReference>
<dbReference type="GO" id="GO:0030289">
    <property type="term" value="C:protein phosphatase 4 complex"/>
    <property type="evidence" value="ECO:0000314"/>
    <property type="project" value="SGD"/>
</dbReference>
<dbReference type="GO" id="GO:0046872">
    <property type="term" value="F:metal ion binding"/>
    <property type="evidence" value="ECO:0007669"/>
    <property type="project" value="UniProtKB-KW"/>
</dbReference>
<dbReference type="GO" id="GO:0004722">
    <property type="term" value="F:protein serine/threonine phosphatase activity"/>
    <property type="evidence" value="ECO:0000314"/>
    <property type="project" value="SGD"/>
</dbReference>
<dbReference type="GO" id="GO:0000724">
    <property type="term" value="P:double-strand break repair via homologous recombination"/>
    <property type="evidence" value="ECO:0000316"/>
    <property type="project" value="SGD"/>
</dbReference>
<dbReference type="GO" id="GO:0051598">
    <property type="term" value="P:meiotic recombination checkpoint signaling"/>
    <property type="evidence" value="ECO:0000315"/>
    <property type="project" value="SGD"/>
</dbReference>
<dbReference type="GO" id="GO:2000002">
    <property type="term" value="P:negative regulation of DNA damage checkpoint"/>
    <property type="evidence" value="ECO:0000315"/>
    <property type="project" value="SGD"/>
</dbReference>
<dbReference type="GO" id="GO:1902660">
    <property type="term" value="P:negative regulation of glucose mediated signaling pathway"/>
    <property type="evidence" value="ECO:0000315"/>
    <property type="project" value="SGD"/>
</dbReference>
<dbReference type="GO" id="GO:2001034">
    <property type="term" value="P:positive regulation of double-strand break repair via nonhomologous end joining"/>
    <property type="evidence" value="ECO:0000315"/>
    <property type="project" value="SGD"/>
</dbReference>
<dbReference type="GO" id="GO:0006470">
    <property type="term" value="P:protein dephosphorylation"/>
    <property type="evidence" value="ECO:0000314"/>
    <property type="project" value="CACAO"/>
</dbReference>
<dbReference type="GO" id="GO:0019222">
    <property type="term" value="P:regulation of metabolic process"/>
    <property type="evidence" value="ECO:0000315"/>
    <property type="project" value="SGD"/>
</dbReference>
<dbReference type="GO" id="GO:1903432">
    <property type="term" value="P:regulation of TORC1 signaling"/>
    <property type="evidence" value="ECO:0000316"/>
    <property type="project" value="SGD"/>
</dbReference>
<dbReference type="CDD" id="cd07415">
    <property type="entry name" value="MPP_PP2A_PP4_PP6"/>
    <property type="match status" value="1"/>
</dbReference>
<dbReference type="FunFam" id="3.60.21.10:FF:000005">
    <property type="entry name" value="Serine/threonine-protein phosphatase"/>
    <property type="match status" value="1"/>
</dbReference>
<dbReference type="Gene3D" id="3.60.21.10">
    <property type="match status" value="1"/>
</dbReference>
<dbReference type="InterPro" id="IPR004843">
    <property type="entry name" value="Calcineurin-like_PHP_ApaH"/>
</dbReference>
<dbReference type="InterPro" id="IPR029052">
    <property type="entry name" value="Metallo-depent_PP-like"/>
</dbReference>
<dbReference type="InterPro" id="IPR047129">
    <property type="entry name" value="PPA2-like"/>
</dbReference>
<dbReference type="InterPro" id="IPR006186">
    <property type="entry name" value="Ser/Thr-sp_prot-phosphatase"/>
</dbReference>
<dbReference type="PANTHER" id="PTHR45619">
    <property type="entry name" value="SERINE/THREONINE-PROTEIN PHOSPHATASE PP2A-RELATED"/>
    <property type="match status" value="1"/>
</dbReference>
<dbReference type="Pfam" id="PF00149">
    <property type="entry name" value="Metallophos"/>
    <property type="match status" value="1"/>
</dbReference>
<dbReference type="PRINTS" id="PR00114">
    <property type="entry name" value="STPHPHTASE"/>
</dbReference>
<dbReference type="SMART" id="SM00156">
    <property type="entry name" value="PP2Ac"/>
    <property type="match status" value="1"/>
</dbReference>
<dbReference type="SUPFAM" id="SSF56300">
    <property type="entry name" value="Metallo-dependent phosphatases"/>
    <property type="match status" value="1"/>
</dbReference>
<dbReference type="PROSITE" id="PS00125">
    <property type="entry name" value="SER_THR_PHOSPHATASE"/>
    <property type="match status" value="1"/>
</dbReference>
<organism>
    <name type="scientific">Saccharomyces cerevisiae (strain ATCC 204508 / S288c)</name>
    <name type="common">Baker's yeast</name>
    <dbReference type="NCBI Taxonomy" id="559292"/>
    <lineage>
        <taxon>Eukaryota</taxon>
        <taxon>Fungi</taxon>
        <taxon>Dikarya</taxon>
        <taxon>Ascomycota</taxon>
        <taxon>Saccharomycotina</taxon>
        <taxon>Saccharomycetes</taxon>
        <taxon>Saccharomycetales</taxon>
        <taxon>Saccharomycetaceae</taxon>
        <taxon>Saccharomyces</taxon>
    </lineage>
</organism>
<sequence>MMDLDKIIASLRDGKHIPEETVFRLCLNSQELLMNEGNVTQVDTPVTICGDIHGQLHDLLTLFEKSGGVEKTRYIFLGDFVDRGFYSLESFLLLLCYKLRYPDRITLIRGNHETRQITKVYGFYDEVVRKYGNSNVWRYCCEVFDYLSLGAIINNSIFCVHGGLSPDMTTVDEIRTIDRKQEVPHEGAMCDLLWSDPEDVDTWSLSPRGAGFLFGKREVDQFLEKNNVELIARAHQLVMEGYKEMFDGGLVTVWSAPNYCYRCGNVAAVLKIDDDLNREYTIFEAVQAQNEVGNAIIPTKKSQMDYFL</sequence>
<feature type="chain" id="PRO_0000058875" description="Serine/threonine-protein phosphatase 4 catalytic subunit">
    <location>
        <begin position="1"/>
        <end position="308"/>
    </location>
</feature>
<feature type="active site" description="Proton donor" evidence="1">
    <location>
        <position position="112"/>
    </location>
</feature>
<feature type="binding site" evidence="1">
    <location>
        <position position="51"/>
    </location>
    <ligand>
        <name>Mn(2+)</name>
        <dbReference type="ChEBI" id="CHEBI:29035"/>
        <label>1</label>
    </ligand>
</feature>
<feature type="binding site" evidence="1">
    <location>
        <position position="53"/>
    </location>
    <ligand>
        <name>Mn(2+)</name>
        <dbReference type="ChEBI" id="CHEBI:29035"/>
        <label>1</label>
    </ligand>
</feature>
<feature type="binding site" evidence="1">
    <location>
        <position position="79"/>
    </location>
    <ligand>
        <name>Mn(2+)</name>
        <dbReference type="ChEBI" id="CHEBI:29035"/>
        <label>1</label>
    </ligand>
</feature>
<feature type="binding site" evidence="1">
    <location>
        <position position="79"/>
    </location>
    <ligand>
        <name>Mn(2+)</name>
        <dbReference type="ChEBI" id="CHEBI:29035"/>
        <label>2</label>
    </ligand>
</feature>
<feature type="binding site" evidence="1">
    <location>
        <position position="111"/>
    </location>
    <ligand>
        <name>Mn(2+)</name>
        <dbReference type="ChEBI" id="CHEBI:29035"/>
        <label>2</label>
    </ligand>
</feature>
<feature type="binding site" evidence="1">
    <location>
        <position position="161"/>
    </location>
    <ligand>
        <name>Mn(2+)</name>
        <dbReference type="ChEBI" id="CHEBI:29035"/>
        <label>2</label>
    </ligand>
</feature>
<feature type="binding site" evidence="1">
    <location>
        <position position="235"/>
    </location>
    <ligand>
        <name>Mn(2+)</name>
        <dbReference type="ChEBI" id="CHEBI:29035"/>
        <label>2</label>
    </ligand>
</feature>
<feature type="sequence conflict" description="In Ref. 1; CAA41662." evidence="9" ref="1">
    <original>M</original>
    <variation>I</variation>
    <location>
        <position position="245"/>
    </location>
</feature>
<keyword id="KW-0963">Cytoplasm</keyword>
<keyword id="KW-0378">Hydrolase</keyword>
<keyword id="KW-0464">Manganese</keyword>
<keyword id="KW-0479">Metal-binding</keyword>
<keyword id="KW-0488">Methylation</keyword>
<keyword id="KW-0539">Nucleus</keyword>
<keyword id="KW-0904">Protein phosphatase</keyword>
<keyword id="KW-1185">Reference proteome</keyword>